<protein>
    <recommendedName>
        <fullName>POU domain, class 4, transcription factor 3</fullName>
    </recommendedName>
    <alternativeName>
        <fullName>Brain-specific homeobox/POU domain protein 3.1</fullName>
        <shortName>Brain-3.1</shortName>
        <shortName>zfBrn-3.1</shortName>
    </alternativeName>
</protein>
<reference key="1">
    <citation type="journal article" date="2005" name="Development">
        <title>A GFP-based genetic screen reveals mutations that disrupt the architecture of the zebrafish retinotectal projection.</title>
        <authorList>
            <person name="Xiao T."/>
            <person name="Roeser T."/>
            <person name="Staub W."/>
            <person name="Baier H."/>
        </authorList>
    </citation>
    <scope>NUCLEOTIDE SEQUENCE [MRNA]</scope>
    <scope>TISSUE SPECIFICITY</scope>
</reference>
<reference key="2">
    <citation type="journal article" date="1996" name="Biochem. Biophys. Res. Commun.">
        <title>Developmental expression of class III and IV POU domain genes in the zebrafish.</title>
        <authorList>
            <person name="Sampath K."/>
            <person name="Stuart G.W."/>
        </authorList>
    </citation>
    <scope>NUCLEOTIDE SEQUENCE [GENOMIC DNA] OF 196-311</scope>
    <scope>TISSUE SPECIFICITY</scope>
    <scope>DEVELOPMENTAL STAGE</scope>
</reference>
<reference key="3">
    <citation type="journal article" date="2004" name="Dev. Dyn.">
        <title>Developmental expression of the POU domain transcription factor Brn-3b (Pou4f2) in the lateral line and visual system of zebrafish.</title>
        <authorList>
            <person name="DeCarvalho A.C."/>
            <person name="Cappendijk S.L."/>
            <person name="Fadool J.M."/>
        </authorList>
    </citation>
    <scope>TISSUE SPECIFICITY</scope>
    <scope>DEVELOPMENTAL STAGE</scope>
</reference>
<organism>
    <name type="scientific">Danio rerio</name>
    <name type="common">Zebrafish</name>
    <name type="synonym">Brachydanio rerio</name>
    <dbReference type="NCBI Taxonomy" id="7955"/>
    <lineage>
        <taxon>Eukaryota</taxon>
        <taxon>Metazoa</taxon>
        <taxon>Chordata</taxon>
        <taxon>Craniata</taxon>
        <taxon>Vertebrata</taxon>
        <taxon>Euteleostomi</taxon>
        <taxon>Actinopterygii</taxon>
        <taxon>Neopterygii</taxon>
        <taxon>Teleostei</taxon>
        <taxon>Ostariophysi</taxon>
        <taxon>Cypriniformes</taxon>
        <taxon>Danionidae</taxon>
        <taxon>Danioninae</taxon>
        <taxon>Danio</taxon>
    </lineage>
</organism>
<sequence length="331" mass="36550">MMTMNGKQHFSMHPALHPSSEGMRRVCLPAPQLQGNIFSGFDESLLARAEALAAADIVSHGKSHPFKTDVTYHTMSSVPCTSSSSTVPISHPSSNLPSHHHHHLSHQTLEGDLLDHISSSLSVSGMGAPPDPSVMTTQAHQHHLQMGHLHQAMAMGHPHTLSVHNGMACVNDVESDPRELEAFAERFKQRRIKLGVTQADVGSALANLKIPGVGSLSQSTICRFESLTLSHNNMIALKPVLQAWLEEAEAAYREKNGKPDLFNGNERKRKRTSIAAPEKRSLEAYFAIQPRPSSEKIAAIAEKLDLKKNVVRVWFCNQRQKQKRMKYSAVH</sequence>
<evidence type="ECO:0000250" key="1">
    <source>
        <dbReference type="UniProtKB" id="Q15319"/>
    </source>
</evidence>
<evidence type="ECO:0000250" key="2">
    <source>
        <dbReference type="UniProtKB" id="Q63955"/>
    </source>
</evidence>
<evidence type="ECO:0000255" key="3">
    <source>
        <dbReference type="PROSITE-ProRule" id="PRU00108"/>
    </source>
</evidence>
<evidence type="ECO:0000255" key="4">
    <source>
        <dbReference type="PROSITE-ProRule" id="PRU00530"/>
    </source>
</evidence>
<evidence type="ECO:0000256" key="5">
    <source>
        <dbReference type="SAM" id="MobiDB-lite"/>
    </source>
</evidence>
<evidence type="ECO:0000269" key="6">
    <source>
    </source>
</evidence>
<evidence type="ECO:0000269" key="7">
    <source>
    </source>
</evidence>
<evidence type="ECO:0000269" key="8">
    <source>
    </source>
</evidence>
<evidence type="ECO:0000305" key="9"/>
<proteinExistence type="evidence at transcript level"/>
<comment type="function">
    <text evidence="2">Acts as a transcriptional activator. Acts by binding to sequences related to the consensus octamer motif 5'-ATGCAAAT-3' in the regulatory regions of its target genes. May play a role in specifying terminally differentiated neuronal phenotypes.</text>
</comment>
<comment type="subunit">
    <text evidence="2">Interaction with ISL1.</text>
</comment>
<comment type="subcellular location">
    <subcellularLocation>
        <location evidence="1">Nucleus</location>
    </subcellularLocation>
    <subcellularLocation>
        <location evidence="1">Cytoplasm</location>
    </subcellularLocation>
    <text evidence="1">Preferentially localized in the nucleus.</text>
</comment>
<comment type="tissue specificity">
    <text evidence="6 7 8">Expressed in the nervous system. Expressed in the otic vesicle during embryogenesis. Expressed in the adult retina in a subset of retinal ganglion cells (RGCs), and at a lower level in the adult tectum. Not expressed in the adult olfactory bulb.</text>
</comment>
<comment type="developmental stage">
    <text evidence="6 8">Weakly expressed during embryogenesis, with stronger expression in the adult eye.</text>
</comment>
<comment type="similarity">
    <text evidence="9">Belongs to the POU transcription factor family. Class-4 subfamily.</text>
</comment>
<accession>Q90435</accession>
<accession>Q52NV5</accession>
<dbReference type="EMBL" id="AY995217">
    <property type="protein sequence ID" value="AAX86839.1"/>
    <property type="molecule type" value="mRNA"/>
</dbReference>
<dbReference type="EMBL" id="U43658">
    <property type="protein sequence ID" value="AAB00435.1"/>
    <property type="molecule type" value="Genomic_DNA"/>
</dbReference>
<dbReference type="RefSeq" id="NP_571353.1">
    <property type="nucleotide sequence ID" value="NM_131278.1"/>
</dbReference>
<dbReference type="SMR" id="Q90435"/>
<dbReference type="FunCoup" id="Q90435">
    <property type="interactions" value="584"/>
</dbReference>
<dbReference type="STRING" id="7955.ENSDARP00000124728"/>
<dbReference type="PaxDb" id="7955-ENSDARP00000124728"/>
<dbReference type="Ensembl" id="ENSDART00000149175">
    <property type="protein sequence ID" value="ENSDARP00000124728"/>
    <property type="gene ID" value="ENSDARG00000006206"/>
</dbReference>
<dbReference type="GeneID" id="30534"/>
<dbReference type="KEGG" id="dre:30534"/>
<dbReference type="AGR" id="ZFIN:ZDB-GENE-990415-24"/>
<dbReference type="CTD" id="5459"/>
<dbReference type="ZFIN" id="ZDB-GENE-990415-24">
    <property type="gene designation" value="pou4f3"/>
</dbReference>
<dbReference type="eggNOG" id="KOG1168">
    <property type="taxonomic scope" value="Eukaryota"/>
</dbReference>
<dbReference type="HOGENOM" id="CLU_013065_0_0_1"/>
<dbReference type="InParanoid" id="Q90435"/>
<dbReference type="OMA" id="GMNAKQP"/>
<dbReference type="OrthoDB" id="6358449at2759"/>
<dbReference type="PhylomeDB" id="Q90435"/>
<dbReference type="PRO" id="PR:Q90435"/>
<dbReference type="Proteomes" id="UP000000437">
    <property type="component" value="Chromosome 9"/>
</dbReference>
<dbReference type="Bgee" id="ENSDARG00000006206">
    <property type="expression patterns" value="Expressed in retina and 7 other cell types or tissues"/>
</dbReference>
<dbReference type="GO" id="GO:0005737">
    <property type="term" value="C:cytoplasm"/>
    <property type="evidence" value="ECO:0000250"/>
    <property type="project" value="UniProtKB"/>
</dbReference>
<dbReference type="GO" id="GO:0005634">
    <property type="term" value="C:nucleus"/>
    <property type="evidence" value="ECO:0000250"/>
    <property type="project" value="UniProtKB"/>
</dbReference>
<dbReference type="GO" id="GO:0000981">
    <property type="term" value="F:DNA-binding transcription factor activity, RNA polymerase II-specific"/>
    <property type="evidence" value="ECO:0000318"/>
    <property type="project" value="GO_Central"/>
</dbReference>
<dbReference type="GO" id="GO:0000978">
    <property type="term" value="F:RNA polymerase II cis-regulatory region sequence-specific DNA binding"/>
    <property type="evidence" value="ECO:0000318"/>
    <property type="project" value="GO_Central"/>
</dbReference>
<dbReference type="GO" id="GO:0043565">
    <property type="term" value="F:sequence-specific DNA binding"/>
    <property type="evidence" value="ECO:0000250"/>
    <property type="project" value="UniProtKB"/>
</dbReference>
<dbReference type="GO" id="GO:0007420">
    <property type="term" value="P:brain development"/>
    <property type="evidence" value="ECO:0000270"/>
    <property type="project" value="ZFIN"/>
</dbReference>
<dbReference type="GO" id="GO:0030154">
    <property type="term" value="P:cell differentiation"/>
    <property type="evidence" value="ECO:0007669"/>
    <property type="project" value="UniProtKB-KW"/>
</dbReference>
<dbReference type="GO" id="GO:0006357">
    <property type="term" value="P:regulation of transcription by RNA polymerase II"/>
    <property type="evidence" value="ECO:0000318"/>
    <property type="project" value="GO_Central"/>
</dbReference>
<dbReference type="CDD" id="cd00086">
    <property type="entry name" value="homeodomain"/>
    <property type="match status" value="1"/>
</dbReference>
<dbReference type="FunFam" id="1.10.10.60:FF:000056">
    <property type="entry name" value="POU domain protein"/>
    <property type="match status" value="1"/>
</dbReference>
<dbReference type="FunFam" id="1.10.260.40:FF:000007">
    <property type="entry name" value="POU domain protein"/>
    <property type="match status" value="1"/>
</dbReference>
<dbReference type="Gene3D" id="1.10.10.60">
    <property type="entry name" value="Homeodomain-like"/>
    <property type="match status" value="1"/>
</dbReference>
<dbReference type="Gene3D" id="1.10.260.40">
    <property type="entry name" value="lambda repressor-like DNA-binding domains"/>
    <property type="match status" value="1"/>
</dbReference>
<dbReference type="InterPro" id="IPR001356">
    <property type="entry name" value="HD"/>
</dbReference>
<dbReference type="InterPro" id="IPR017970">
    <property type="entry name" value="Homeobox_CS"/>
</dbReference>
<dbReference type="InterPro" id="IPR009057">
    <property type="entry name" value="Homeodomain-like_sf"/>
</dbReference>
<dbReference type="InterPro" id="IPR010982">
    <property type="entry name" value="Lambda_DNA-bd_dom_sf"/>
</dbReference>
<dbReference type="InterPro" id="IPR013847">
    <property type="entry name" value="POU"/>
</dbReference>
<dbReference type="InterPro" id="IPR000327">
    <property type="entry name" value="POU_dom"/>
</dbReference>
<dbReference type="InterPro" id="IPR050255">
    <property type="entry name" value="POU_domain_TF"/>
</dbReference>
<dbReference type="PANTHER" id="PTHR11636">
    <property type="entry name" value="POU DOMAIN"/>
    <property type="match status" value="1"/>
</dbReference>
<dbReference type="PANTHER" id="PTHR11636:SF43">
    <property type="entry name" value="POU DOMAIN, CLASS 4, TRANSCRIPTION FACTOR 3"/>
    <property type="match status" value="1"/>
</dbReference>
<dbReference type="Pfam" id="PF00046">
    <property type="entry name" value="Homeodomain"/>
    <property type="match status" value="1"/>
</dbReference>
<dbReference type="Pfam" id="PF00157">
    <property type="entry name" value="Pou"/>
    <property type="match status" value="1"/>
</dbReference>
<dbReference type="PRINTS" id="PR00028">
    <property type="entry name" value="POUDOMAIN"/>
</dbReference>
<dbReference type="SMART" id="SM00389">
    <property type="entry name" value="HOX"/>
    <property type="match status" value="1"/>
</dbReference>
<dbReference type="SMART" id="SM00352">
    <property type="entry name" value="POU"/>
    <property type="match status" value="1"/>
</dbReference>
<dbReference type="SUPFAM" id="SSF46689">
    <property type="entry name" value="Homeodomain-like"/>
    <property type="match status" value="1"/>
</dbReference>
<dbReference type="SUPFAM" id="SSF47413">
    <property type="entry name" value="lambda repressor-like DNA-binding domains"/>
    <property type="match status" value="1"/>
</dbReference>
<dbReference type="PROSITE" id="PS00027">
    <property type="entry name" value="HOMEOBOX_1"/>
    <property type="match status" value="1"/>
</dbReference>
<dbReference type="PROSITE" id="PS50071">
    <property type="entry name" value="HOMEOBOX_2"/>
    <property type="match status" value="1"/>
</dbReference>
<dbReference type="PROSITE" id="PS00035">
    <property type="entry name" value="POU_1"/>
    <property type="match status" value="1"/>
</dbReference>
<dbReference type="PROSITE" id="PS00465">
    <property type="entry name" value="POU_2"/>
    <property type="match status" value="1"/>
</dbReference>
<dbReference type="PROSITE" id="PS51179">
    <property type="entry name" value="POU_3"/>
    <property type="match status" value="1"/>
</dbReference>
<gene>
    <name type="primary">pou4f3</name>
    <name type="synonym">brn-3.1</name>
    <name type="synonym">brn-3c</name>
    <name type="synonym">brn3.1</name>
    <name type="synonym">brn3c</name>
</gene>
<name>PO4F3_DANRE</name>
<feature type="chain" id="PRO_0000100745" description="POU domain, class 4, transcription factor 3">
    <location>
        <begin position="1"/>
        <end position="331"/>
    </location>
</feature>
<feature type="domain" description="POU-specific" evidence="4">
    <location>
        <begin position="172"/>
        <end position="249"/>
    </location>
</feature>
<feature type="DNA-binding region" description="Homeobox" evidence="3">
    <location>
        <begin position="267"/>
        <end position="326"/>
    </location>
</feature>
<feature type="region of interest" description="Disordered" evidence="5">
    <location>
        <begin position="81"/>
        <end position="108"/>
    </location>
</feature>
<feature type="compositionally biased region" description="Low complexity" evidence="5">
    <location>
        <begin position="81"/>
        <end position="97"/>
    </location>
</feature>
<feature type="sequence conflict" description="In Ref. 2; AAB00435." evidence="9" ref="2">
    <original>A</original>
    <variation>R</variation>
    <location>
        <position position="299"/>
    </location>
</feature>
<keyword id="KW-0010">Activator</keyword>
<keyword id="KW-0963">Cytoplasm</keyword>
<keyword id="KW-0221">Differentiation</keyword>
<keyword id="KW-0238">DNA-binding</keyword>
<keyword id="KW-0371">Homeobox</keyword>
<keyword id="KW-0539">Nucleus</keyword>
<keyword id="KW-1185">Reference proteome</keyword>
<keyword id="KW-0804">Transcription</keyword>
<keyword id="KW-0805">Transcription regulation</keyword>